<dbReference type="EMBL" id="CP000950">
    <property type="protein sequence ID" value="ACA70335.1"/>
    <property type="molecule type" value="Genomic_DNA"/>
</dbReference>
<dbReference type="RefSeq" id="WP_002209476.1">
    <property type="nucleotide sequence ID" value="NZ_CP009792.1"/>
</dbReference>
<dbReference type="SMR" id="B1JQ48"/>
<dbReference type="GeneID" id="96663601"/>
<dbReference type="KEGG" id="ypy:YPK_4076"/>
<dbReference type="PATRIC" id="fig|502800.11.peg.425"/>
<dbReference type="GO" id="GO:0005737">
    <property type="term" value="C:cytoplasm"/>
    <property type="evidence" value="ECO:0007669"/>
    <property type="project" value="UniProtKB-SubCell"/>
</dbReference>
<dbReference type="GO" id="GO:0003677">
    <property type="term" value="F:DNA binding"/>
    <property type="evidence" value="ECO:0007669"/>
    <property type="project" value="UniProtKB-KW"/>
</dbReference>
<dbReference type="GO" id="GO:0003700">
    <property type="term" value="F:DNA-binding transcription factor activity"/>
    <property type="evidence" value="ECO:0007669"/>
    <property type="project" value="UniProtKB-UniRule"/>
</dbReference>
<dbReference type="GO" id="GO:0006633">
    <property type="term" value="P:fatty acid biosynthetic process"/>
    <property type="evidence" value="ECO:0007669"/>
    <property type="project" value="UniProtKB-UniRule"/>
</dbReference>
<dbReference type="GO" id="GO:0045717">
    <property type="term" value="P:negative regulation of fatty acid biosynthetic process"/>
    <property type="evidence" value="ECO:0007669"/>
    <property type="project" value="UniProtKB-UniRule"/>
</dbReference>
<dbReference type="FunFam" id="1.10.10.60:FF:000034">
    <property type="entry name" value="HTH-type transcriptional repressor FabR"/>
    <property type="match status" value="1"/>
</dbReference>
<dbReference type="FunFam" id="1.10.357.10:FF:000001">
    <property type="entry name" value="HTH-type transcriptional repressor FabR"/>
    <property type="match status" value="1"/>
</dbReference>
<dbReference type="Gene3D" id="1.10.10.60">
    <property type="entry name" value="Homeodomain-like"/>
    <property type="match status" value="1"/>
</dbReference>
<dbReference type="Gene3D" id="1.10.357.10">
    <property type="entry name" value="Tetracycline Repressor, domain 2"/>
    <property type="match status" value="1"/>
</dbReference>
<dbReference type="HAMAP" id="MF_01190">
    <property type="entry name" value="HTH_type_FabR"/>
    <property type="match status" value="1"/>
</dbReference>
<dbReference type="InterPro" id="IPR054129">
    <property type="entry name" value="DesT_TetR_C"/>
</dbReference>
<dbReference type="InterPro" id="IPR009057">
    <property type="entry name" value="Homeodomain-like_sf"/>
</dbReference>
<dbReference type="InterPro" id="IPR001647">
    <property type="entry name" value="HTH_TetR"/>
</dbReference>
<dbReference type="InterPro" id="IPR050692">
    <property type="entry name" value="HTH_transcr_repressor_FabR"/>
</dbReference>
<dbReference type="InterPro" id="IPR023764">
    <property type="entry name" value="Tscrpt_reg_HTH_FabR"/>
</dbReference>
<dbReference type="NCBIfam" id="NF008402">
    <property type="entry name" value="PRK11202.1"/>
    <property type="match status" value="1"/>
</dbReference>
<dbReference type="PANTHER" id="PTHR47752">
    <property type="entry name" value="HTH-TYPE TRANSCRIPTIONAL REPRESSOR FABR"/>
    <property type="match status" value="1"/>
</dbReference>
<dbReference type="PANTHER" id="PTHR47752:SF1">
    <property type="entry name" value="HTH-TYPE TRANSCRIPTIONAL REPRESSOR FABR"/>
    <property type="match status" value="1"/>
</dbReference>
<dbReference type="Pfam" id="PF21943">
    <property type="entry name" value="TetR_C_46"/>
    <property type="match status" value="1"/>
</dbReference>
<dbReference type="Pfam" id="PF00440">
    <property type="entry name" value="TetR_N"/>
    <property type="match status" value="1"/>
</dbReference>
<dbReference type="SUPFAM" id="SSF46689">
    <property type="entry name" value="Homeodomain-like"/>
    <property type="match status" value="1"/>
</dbReference>
<dbReference type="PROSITE" id="PS50977">
    <property type="entry name" value="HTH_TETR_2"/>
    <property type="match status" value="1"/>
</dbReference>
<name>FABR_YERPY</name>
<organism>
    <name type="scientific">Yersinia pseudotuberculosis serotype O:3 (strain YPIII)</name>
    <dbReference type="NCBI Taxonomy" id="502800"/>
    <lineage>
        <taxon>Bacteria</taxon>
        <taxon>Pseudomonadati</taxon>
        <taxon>Pseudomonadota</taxon>
        <taxon>Gammaproteobacteria</taxon>
        <taxon>Enterobacterales</taxon>
        <taxon>Yersiniaceae</taxon>
        <taxon>Yersinia</taxon>
    </lineage>
</organism>
<feature type="chain" id="PRO_1000138364" description="HTH-type transcriptional repressor FabR">
    <location>
        <begin position="1"/>
        <end position="211"/>
    </location>
</feature>
<feature type="domain" description="HTH tetR-type" evidence="1">
    <location>
        <begin position="10"/>
        <end position="70"/>
    </location>
</feature>
<feature type="DNA-binding region" description="H-T-H motif" evidence="1">
    <location>
        <begin position="33"/>
        <end position="52"/>
    </location>
</feature>
<reference key="1">
    <citation type="submission" date="2008-02" db="EMBL/GenBank/DDBJ databases">
        <title>Complete sequence of Yersinia pseudotuberculosis YPIII.</title>
        <authorList>
            <consortium name="US DOE Joint Genome Institute"/>
            <person name="Copeland A."/>
            <person name="Lucas S."/>
            <person name="Lapidus A."/>
            <person name="Glavina del Rio T."/>
            <person name="Dalin E."/>
            <person name="Tice H."/>
            <person name="Bruce D."/>
            <person name="Goodwin L."/>
            <person name="Pitluck S."/>
            <person name="Munk A.C."/>
            <person name="Brettin T."/>
            <person name="Detter J.C."/>
            <person name="Han C."/>
            <person name="Tapia R."/>
            <person name="Schmutz J."/>
            <person name="Larimer F."/>
            <person name="Land M."/>
            <person name="Hauser L."/>
            <person name="Challacombe J.F."/>
            <person name="Green L."/>
            <person name="Lindler L.E."/>
            <person name="Nikolich M.P."/>
            <person name="Richardson P."/>
        </authorList>
    </citation>
    <scope>NUCLEOTIDE SEQUENCE [LARGE SCALE GENOMIC DNA]</scope>
    <source>
        <strain>YPIII</strain>
    </source>
</reference>
<evidence type="ECO:0000255" key="1">
    <source>
        <dbReference type="HAMAP-Rule" id="MF_01190"/>
    </source>
</evidence>
<protein>
    <recommendedName>
        <fullName evidence="1">HTH-type transcriptional repressor FabR</fullName>
    </recommendedName>
</protein>
<gene>
    <name evidence="1" type="primary">fabR</name>
    <name type="ordered locus">YPK_4076</name>
</gene>
<proteinExistence type="inferred from homology"/>
<comment type="function">
    <text evidence="1">Represses the transcription of fabB, involved in unsaturated fatty acid (UFA) biosynthesis. By controlling UFA production, FabR directly influences the physical properties of the membrane bilayer.</text>
</comment>
<comment type="subunit">
    <text evidence="1">Homodimer.</text>
</comment>
<comment type="subcellular location">
    <subcellularLocation>
        <location evidence="1">Cytoplasm</location>
    </subcellularLocation>
</comment>
<keyword id="KW-0963">Cytoplasm</keyword>
<keyword id="KW-0238">DNA-binding</keyword>
<keyword id="KW-0275">Fatty acid biosynthesis</keyword>
<keyword id="KW-0276">Fatty acid metabolism</keyword>
<keyword id="KW-0444">Lipid biosynthesis</keyword>
<keyword id="KW-0443">Lipid metabolism</keyword>
<keyword id="KW-0678">Repressor</keyword>
<keyword id="KW-0804">Transcription</keyword>
<keyword id="KW-0805">Transcription regulation</keyword>
<sequence>MGVRAQQKERTRRSLIEAAFSQLSAERSFASLSLREVSREAGIAPTSFYRHFRDVDELGLTMVDESGLMLRQLMRQARQRIAKGGSVIRTSVSTFMEFIGNNPNAFRLLLRERSGTSAAFRAAVAREIQHFIAELADYLELENHMPRSFTEAQAEAMVTIVFSAGAEVLDVDIEQRRQLEERLVLQLRMISKGAYYWYRREQEKLAASRVE</sequence>
<accession>B1JQ48</accession>